<organism>
    <name type="scientific">Allomeiothermus silvanus (strain ATCC 700542 / DSM 9946 / NBRC 106475 / NCIMB 13440 / VI-R2)</name>
    <name type="common">Thermus silvanus</name>
    <dbReference type="NCBI Taxonomy" id="526227"/>
    <lineage>
        <taxon>Bacteria</taxon>
        <taxon>Thermotogati</taxon>
        <taxon>Deinococcota</taxon>
        <taxon>Deinococci</taxon>
        <taxon>Thermales</taxon>
        <taxon>Thermaceae</taxon>
        <taxon>Allomeiothermus</taxon>
    </lineage>
</organism>
<name>GGAP_ALLS1</name>
<accession>D7BAR0</accession>
<proteinExistence type="evidence at protein level"/>
<comment type="function">
    <text evidence="2">Catalyzes the reversible phosphorolysis of glucosylglycerate into alpha-D-glucose 1-phosphate (Glc1P) and D-glycerate. May be a regulator of intracellular levels of glucosylglycerate, a compatible solute that primarily protects organisms facing salt stress and very specific nutritional constraints. Has a very strict substrate specificity. Cannot catalyze the phosphorolysis of sucrose or synthesize sucrose from Glc1P and D-fructose.</text>
</comment>
<comment type="catalytic activity">
    <reaction evidence="2">
        <text>(2R)-2-O-(alpha-D-glucopyranosyl)-glycerate + phosphate = (R)-glycerate + alpha-D-glucose 1-phosphate</text>
        <dbReference type="Rhea" id="RHEA:55268"/>
        <dbReference type="ChEBI" id="CHEBI:16659"/>
        <dbReference type="ChEBI" id="CHEBI:43474"/>
        <dbReference type="ChEBI" id="CHEBI:58601"/>
        <dbReference type="ChEBI" id="CHEBI:62510"/>
        <dbReference type="EC" id="2.4.1.352"/>
    </reaction>
</comment>
<comment type="biophysicochemical properties">
    <kinetics>
        <KM evidence="2">3.5 mM for 2-O-(alpha-D-glucopyranosyl)-D-glycerate (at pH 6.0 and 42 degrees Celsius)</KM>
        <KM evidence="2">2.5 mM for phosphate (at pH 6.0 and 42 degrees Celsius)</KM>
        <KM evidence="2">8.1 mM for alpha-D-glucose 1-phosphate (at pH 6.5 and 42 degrees Celsius)</KM>
        <KM evidence="2">2.6 mM for D-glycerate (at pH 6.5 and 42 degrees Celsius)</KM>
        <text evidence="2">kcat is 0.83 sec(-1) towards 2-O-(alpha-D-glucopyranosyl)-D-glycerate for the phosphorolytic direction (at pH 6.0 and 42 degrees Celsius). kcat is 0.98 sec(-1) towards phosphate for the phosphorolytic direction (at pH 6.0 and 42 degrees Celsius). kcat is 96 sec(-1) towards alpha-D-glucose 1-phosphate for the synthetic direction (at pH 6.5 and 42 degrees Celsius). kcat is 128 sec(-1) towards D-glycerate for the synthetic direction (at pH 6.5 and 42 degrees Celsius).</text>
    </kinetics>
    <phDependence>
        <text evidence="2">Optimum pH is 6 and 6.5 in phosphorolytic and synthetic directions, respectively.</text>
    </phDependence>
    <temperatureDependence>
        <text evidence="2">Optimum temperature is 42 degrees Celsius. Retains full activity after incubating at up to 55 degrees Celsius for 10 minutes, but only 35% is left after incubating at 60 degrees Celsius.</text>
    </temperatureDependence>
</comment>
<comment type="biotechnology">
    <text evidence="5">The excellent specific activity of this enzyme towards glycerate opens up new options for the commercial production of glucosylglycerate. This compound has been reported to be an exceptionally potent and versatile stabilizer of proteins at elevated temperatures.</text>
</comment>
<comment type="similarity">
    <text evidence="4">Belongs to the glycosyl hydrolase 13 family. Glucosylglycerate phosphorylase subfamily.</text>
</comment>
<reference key="1">
    <citation type="journal article" date="2010" name="Stand. Genomic Sci.">
        <title>Complete genome sequence of Meiothermus silvanus type strain (VI-R2).</title>
        <authorList>
            <person name="Sikorski J."/>
            <person name="Tindall B.J."/>
            <person name="Lowry S."/>
            <person name="Lucas S."/>
            <person name="Nolan M."/>
            <person name="Copeland A."/>
            <person name="Glavina Del Rio T."/>
            <person name="Tice H."/>
            <person name="Cheng J.F."/>
            <person name="Han C."/>
            <person name="Pitluck S."/>
            <person name="Liolios K."/>
            <person name="Ivanova N."/>
            <person name="Mavromatis K."/>
            <person name="Mikhailova N."/>
            <person name="Pati A."/>
            <person name="Goodwin L."/>
            <person name="Chen A."/>
            <person name="Palaniappan K."/>
            <person name="Land M."/>
            <person name="Hauser L."/>
            <person name="Chang Y.J."/>
            <person name="Jeffries C.D."/>
            <person name="Rohde M."/>
            <person name="Goker M."/>
            <person name="Woyke T."/>
            <person name="Bristow J."/>
            <person name="Eisen J.A."/>
            <person name="Markowitz V."/>
            <person name="Hugenholtz P."/>
            <person name="Kyrpides N.C."/>
            <person name="Klenk H.P."/>
            <person name="Lapidus A."/>
        </authorList>
    </citation>
    <scope>NUCLEOTIDE SEQUENCE [LARGE SCALE GENOMIC DNA]</scope>
    <source>
        <strain>ATCC 700542 / DSM 9946 / NBRC 106475 / NCIMB 13440 / VI-R2</strain>
    </source>
</reference>
<reference key="2">
    <citation type="journal article" date="2017" name="Appl. Environ. Microbiol.">
        <title>Glucosylglycerate phosphorylase, an enzyme with novel specificity involved in compatible solute metabolism.</title>
        <authorList>
            <person name="Franceus J."/>
            <person name="Pinel D."/>
            <person name="Desmet T."/>
        </authorList>
    </citation>
    <scope>FUNCTION</scope>
    <scope>CATALYTIC ACTIVITY</scope>
    <scope>SUBSTRATE SPECIFICITY</scope>
    <scope>BIOPHYSICOCHEMICAL PROPERTIES</scope>
    <scope>3D-STRUCTURE MODELING</scope>
    <scope>MUTAGENESIS OF ASN-275 AND GLU-383</scope>
    <scope>BIOTECHNOLOGY</scope>
</reference>
<evidence type="ECO:0000250" key="1">
    <source>
        <dbReference type="UniProtKB" id="A0ZZH6"/>
    </source>
</evidence>
<evidence type="ECO:0000269" key="2">
    <source>
    </source>
</evidence>
<evidence type="ECO:0000303" key="3">
    <source>
    </source>
</evidence>
<evidence type="ECO:0000305" key="4"/>
<evidence type="ECO:0000305" key="5">
    <source>
    </source>
</evidence>
<evidence type="ECO:0000312" key="6">
    <source>
        <dbReference type="EMBL" id="ADH62582.1"/>
    </source>
</evidence>
<feature type="chain" id="PRO_0000442433" description="Glucosylglycerate phosphorylase">
    <location>
        <begin position="1"/>
        <end position="555"/>
    </location>
</feature>
<feature type="active site" description="Nucleophile" evidence="1">
    <location>
        <position position="231"/>
    </location>
</feature>
<feature type="mutagenesis site" description="75-fold decrease in catalytic activity." evidence="2">
    <original>N</original>
    <variation>A</variation>
    <location>
        <position position="275"/>
    </location>
</feature>
<feature type="mutagenesis site" description="38-fold decrease in catalytic activity." evidence="2">
    <original>N</original>
    <variation>H</variation>
    <location>
        <position position="275"/>
    </location>
</feature>
<feature type="mutagenesis site" description="More than 100-fold decrease in catalytic activity." evidence="2">
    <original>E</original>
    <variation>A</variation>
    <variation>Q</variation>
    <location>
        <position position="383"/>
    </location>
</feature>
<dbReference type="EC" id="2.4.1.352" evidence="2"/>
<dbReference type="EMBL" id="CP002042">
    <property type="protein sequence ID" value="ADH62582.1"/>
    <property type="molecule type" value="Genomic_DNA"/>
</dbReference>
<dbReference type="RefSeq" id="WP_013157171.1">
    <property type="nucleotide sequence ID" value="NC_014212.1"/>
</dbReference>
<dbReference type="SMR" id="D7BAR0"/>
<dbReference type="STRING" id="526227.Mesil_0665"/>
<dbReference type="CAZy" id="GH13">
    <property type="family name" value="Glycoside Hydrolase Family 13"/>
</dbReference>
<dbReference type="KEGG" id="msv:Mesil_0665"/>
<dbReference type="eggNOG" id="COG0366">
    <property type="taxonomic scope" value="Bacteria"/>
</dbReference>
<dbReference type="HOGENOM" id="CLU_021358_0_0_0"/>
<dbReference type="OrthoDB" id="9805159at2"/>
<dbReference type="BRENDA" id="2.4.1.352">
    <property type="organism ID" value="15676"/>
</dbReference>
<dbReference type="SABIO-RK" id="D7BAR0"/>
<dbReference type="Proteomes" id="UP000001916">
    <property type="component" value="Chromosome"/>
</dbReference>
<dbReference type="GO" id="GO:0016757">
    <property type="term" value="F:glycosyltransferase activity"/>
    <property type="evidence" value="ECO:0007669"/>
    <property type="project" value="UniProtKB-KW"/>
</dbReference>
<dbReference type="GO" id="GO:0005975">
    <property type="term" value="P:carbohydrate metabolic process"/>
    <property type="evidence" value="ECO:0007669"/>
    <property type="project" value="InterPro"/>
</dbReference>
<dbReference type="CDD" id="cd11356">
    <property type="entry name" value="AmyAc_Sucrose_phosphorylase-like_1"/>
    <property type="match status" value="1"/>
</dbReference>
<dbReference type="Gene3D" id="3.20.20.80">
    <property type="entry name" value="Glycosidases"/>
    <property type="match status" value="1"/>
</dbReference>
<dbReference type="Gene3D" id="3.90.400.10">
    <property type="entry name" value="Oligo-1,6-glucosidase, Domain 2"/>
    <property type="match status" value="1"/>
</dbReference>
<dbReference type="InterPro" id="IPR033746">
    <property type="entry name" value="GGa_phosphorylase"/>
</dbReference>
<dbReference type="InterPro" id="IPR006047">
    <property type="entry name" value="Glyco_hydro_13_cat_dom"/>
</dbReference>
<dbReference type="InterPro" id="IPR017853">
    <property type="entry name" value="Glycoside_hydrolase_SF"/>
</dbReference>
<dbReference type="InterPro" id="IPR045857">
    <property type="entry name" value="O16G_dom_2"/>
</dbReference>
<dbReference type="InterPro" id="IPR016377">
    <property type="entry name" value="Sucrose_GGa_phosphorylase-rel"/>
</dbReference>
<dbReference type="PANTHER" id="PTHR10357">
    <property type="entry name" value="ALPHA-AMYLASE FAMILY MEMBER"/>
    <property type="match status" value="1"/>
</dbReference>
<dbReference type="PANTHER" id="PTHR10357:SF214">
    <property type="entry name" value="GLUCOSYLGLYCERATE PHOSPHORYLASE"/>
    <property type="match status" value="1"/>
</dbReference>
<dbReference type="Pfam" id="PF00128">
    <property type="entry name" value="Alpha-amylase"/>
    <property type="match status" value="1"/>
</dbReference>
<dbReference type="PIRSF" id="PIRSF003059">
    <property type="entry name" value="Sucrose_phosphorylase"/>
    <property type="match status" value="1"/>
</dbReference>
<dbReference type="SMART" id="SM00642">
    <property type="entry name" value="Aamy"/>
    <property type="match status" value="1"/>
</dbReference>
<dbReference type="SUPFAM" id="SSF51445">
    <property type="entry name" value="(Trans)glycosidases"/>
    <property type="match status" value="1"/>
</dbReference>
<protein>
    <recommendedName>
        <fullName evidence="3">Glucosylglycerate phosphorylase</fullName>
        <shortName evidence="3">GGa phosphorylase</shortName>
        <shortName evidence="3">GGaP</shortName>
        <ecNumber evidence="2">2.4.1.352</ecNumber>
    </recommendedName>
</protein>
<sequence length="555" mass="61531">MSSLTPELRQSILEHLGFLYGERAPAVLGRLEEICSGFPAQRREGGWSEKDALLITYGDQIHAEGEPPLQTLYDFLYERLRGVFSGVHLLPFYPSTSDDGFSVVDFQRVDPELGTWTDIRIIAQDFRLMADLVCNHVSASSPWFQGFLQDDPQYQGFFITVDPGTDLSTVFRPRALPLLTPFQTPSGEKLVWTTFSPDQTDLNYANPEVLLEVIEALLCYVRNGAGLIRLDAVGFIWKEIGTSCMHLEGAHRIVKLMRLVLDAVAPHVLLVSETNAPHRENISYFGNGHDEAQLVYQFPLPPLVMHTFRTGDASKLAGWAAGLTLPSERTTFFNFLASHDGIGVVPAGGILQPEEIAALVRQALEHGGRVNHKDTPDGPVPYELCLTLFDALSNPNSDEAEDLKIARFLAANVILLSLQGIPGVYIHSLFGSPSDHAGFEESGIPRRLNRHKFTKAELEERLADPASRAAKILAAYSHLLRVRSMHPAFHPNAPQRILPSTEVLRIVRGEGDQAVGCYINVTDRPQVVSRIGKNLITGQWFTGVLKPYQAAWIID</sequence>
<gene>
    <name evidence="6" type="ordered locus">Mesil_0665</name>
</gene>
<keyword id="KW-0119">Carbohydrate metabolism</keyword>
<keyword id="KW-0328">Glycosyltransferase</keyword>
<keyword id="KW-1185">Reference proteome</keyword>
<keyword id="KW-0808">Transferase</keyword>